<accession>Q5XB32</accession>
<comment type="function">
    <text evidence="1">May bind long-chain fatty acids, such as palmitate, and may play a role in lipid transport or fatty acid metabolism.</text>
</comment>
<comment type="sequence caution" evidence="4">
    <conflict type="erroneous initiation">
        <sequence resource="EMBL-CDS" id="AAT87381"/>
    </conflict>
</comment>
<dbReference type="EMBL" id="CP000003">
    <property type="protein sequence ID" value="AAT87381.1"/>
    <property type="status" value="ALT_INIT"/>
    <property type="molecule type" value="Genomic_DNA"/>
</dbReference>
<dbReference type="RefSeq" id="WP_002989125.1">
    <property type="nucleotide sequence ID" value="NC_006086.1"/>
</dbReference>
<dbReference type="SMR" id="Q5XB32"/>
<dbReference type="KEGG" id="spa:M6_Spy1246"/>
<dbReference type="HOGENOM" id="CLU_048251_3_2_9"/>
<dbReference type="Proteomes" id="UP000001167">
    <property type="component" value="Chromosome"/>
</dbReference>
<dbReference type="GO" id="GO:0008289">
    <property type="term" value="F:lipid binding"/>
    <property type="evidence" value="ECO:0007669"/>
    <property type="project" value="UniProtKB-KW"/>
</dbReference>
<dbReference type="Gene3D" id="3.30.1180.10">
    <property type="match status" value="1"/>
</dbReference>
<dbReference type="Gene3D" id="3.40.50.10170">
    <property type="match status" value="1"/>
</dbReference>
<dbReference type="InterPro" id="IPR003797">
    <property type="entry name" value="DegV"/>
</dbReference>
<dbReference type="InterPro" id="IPR043168">
    <property type="entry name" value="DegV_C"/>
</dbReference>
<dbReference type="InterPro" id="IPR050270">
    <property type="entry name" value="DegV_domain_contain"/>
</dbReference>
<dbReference type="NCBIfam" id="TIGR00762">
    <property type="entry name" value="DegV"/>
    <property type="match status" value="1"/>
</dbReference>
<dbReference type="PANTHER" id="PTHR33434">
    <property type="entry name" value="DEGV DOMAIN-CONTAINING PROTEIN DR_1986-RELATED"/>
    <property type="match status" value="1"/>
</dbReference>
<dbReference type="PANTHER" id="PTHR33434:SF8">
    <property type="entry name" value="DEGV DOMAIN-CONTAINING PROTEIN SPR1019"/>
    <property type="match status" value="1"/>
</dbReference>
<dbReference type="Pfam" id="PF02645">
    <property type="entry name" value="DegV"/>
    <property type="match status" value="1"/>
</dbReference>
<dbReference type="SUPFAM" id="SSF82549">
    <property type="entry name" value="DAK1/DegV-like"/>
    <property type="match status" value="1"/>
</dbReference>
<dbReference type="PROSITE" id="PS51482">
    <property type="entry name" value="DEGV"/>
    <property type="match status" value="1"/>
</dbReference>
<sequence>MGTIKIVTDSSITIEPELIKALDITVVPLSVMIDSKLYSDNDLKEEGHFLSLMKASKSLPKTSQPPVGLFAETYENLVKKGVTDIVAIHLSPALSGTIEASRQGAEIAEAPVTVLDSGFTDQAMKFQVVEAAKMAKAGASLNEILAAVQAIKSKTELYIGVSTLENLVKGGRIGRVTGVLSSLLNVKVVMALKNDELKTLVKGRGNKTFTKWLDSYLAKNSHRPIAEIAISYAGEASLALTLKERIAAYYNHSISVLETGSIIQTHTGEGAFAVMVRYE</sequence>
<evidence type="ECO:0000250" key="1"/>
<evidence type="ECO:0000250" key="2">
    <source>
        <dbReference type="UniProtKB" id="Q9X1H9"/>
    </source>
</evidence>
<evidence type="ECO:0000255" key="3">
    <source>
        <dbReference type="PROSITE-ProRule" id="PRU00815"/>
    </source>
</evidence>
<evidence type="ECO:0000305" key="4"/>
<protein>
    <recommendedName>
        <fullName>DegV domain-containing protein M6_Spy1246</fullName>
    </recommendedName>
</protein>
<name>Y1246_STRP6</name>
<feature type="chain" id="PRO_0000209806" description="DegV domain-containing protein M6_Spy1246">
    <location>
        <begin position="1"/>
        <end position="279"/>
    </location>
</feature>
<feature type="domain" description="DegV" evidence="3">
    <location>
        <begin position="4"/>
        <end position="278"/>
    </location>
</feature>
<feature type="binding site" evidence="2">
    <location>
        <position position="62"/>
    </location>
    <ligand>
        <name>hexadecanoate</name>
        <dbReference type="ChEBI" id="CHEBI:7896"/>
    </ligand>
</feature>
<feature type="binding site" evidence="2">
    <location>
        <position position="95"/>
    </location>
    <ligand>
        <name>hexadecanoate</name>
        <dbReference type="ChEBI" id="CHEBI:7896"/>
    </ligand>
</feature>
<reference key="1">
    <citation type="journal article" date="2004" name="J. Infect. Dis.">
        <title>Progress toward characterization of the group A Streptococcus metagenome: complete genome sequence of a macrolide-resistant serotype M6 strain.</title>
        <authorList>
            <person name="Banks D.J."/>
            <person name="Porcella S.F."/>
            <person name="Barbian K.D."/>
            <person name="Beres S.B."/>
            <person name="Philips L.E."/>
            <person name="Voyich J.M."/>
            <person name="DeLeo F.R."/>
            <person name="Martin J.M."/>
            <person name="Somerville G.A."/>
            <person name="Musser J.M."/>
        </authorList>
    </citation>
    <scope>NUCLEOTIDE SEQUENCE [LARGE SCALE GENOMIC DNA]</scope>
    <source>
        <strain>ATCC BAA-946 / MGAS10394</strain>
    </source>
</reference>
<proteinExistence type="inferred from homology"/>
<organism>
    <name type="scientific">Streptococcus pyogenes serotype M6 (strain ATCC BAA-946 / MGAS10394)</name>
    <dbReference type="NCBI Taxonomy" id="286636"/>
    <lineage>
        <taxon>Bacteria</taxon>
        <taxon>Bacillati</taxon>
        <taxon>Bacillota</taxon>
        <taxon>Bacilli</taxon>
        <taxon>Lactobacillales</taxon>
        <taxon>Streptococcaceae</taxon>
        <taxon>Streptococcus</taxon>
    </lineage>
</organism>
<keyword id="KW-0446">Lipid-binding</keyword>
<gene>
    <name type="ordered locus">M6_Spy1246</name>
</gene>